<accession>Q9LVL4</accession>
<proteinExistence type="evidence at protein level"/>
<evidence type="ECO:0000250" key="1"/>
<evidence type="ECO:0000255" key="2">
    <source>
        <dbReference type="PROSITE-ProRule" id="PRU01090"/>
    </source>
</evidence>
<evidence type="ECO:0000256" key="3">
    <source>
        <dbReference type="SAM" id="MobiDB-lite"/>
    </source>
</evidence>
<evidence type="ECO:0000269" key="4">
    <source>
    </source>
</evidence>
<evidence type="ECO:0000269" key="5">
    <source>
    </source>
</evidence>
<evidence type="ECO:0000305" key="6">
    <source>
    </source>
</evidence>
<name>OFP3_ARATH</name>
<sequence>MKQKMGTHKFRFSDMMPHSWLYKLKGMSRSSRKHHLSSPKHLSSADASSSRKLRDPLRRLSSTAHHPQASNSPPKSSSFKRKIKRKTVYKPSSRLKLSTSSSLNHRSKSSSSANAISDSAVGSFLDRVSSPSDQNFVHDPEPHSSIDIKDELSVRKLDDVPEDPSVSPNLSPETAKEPPFEMMTQQKLKKPKAHSSGIKIPTKIVRKKKKERTSQVSKKKGVVKSFAIVLSSVDPEKDFRESMVEMIMENKMREQKDLEDLLACYLSLNSSEYHDVIIKAFENTWLHLTQGLSISL</sequence>
<organism>
    <name type="scientific">Arabidopsis thaliana</name>
    <name type="common">Mouse-ear cress</name>
    <dbReference type="NCBI Taxonomy" id="3702"/>
    <lineage>
        <taxon>Eukaryota</taxon>
        <taxon>Viridiplantae</taxon>
        <taxon>Streptophyta</taxon>
        <taxon>Embryophyta</taxon>
        <taxon>Tracheophyta</taxon>
        <taxon>Spermatophyta</taxon>
        <taxon>Magnoliopsida</taxon>
        <taxon>eudicotyledons</taxon>
        <taxon>Gunneridae</taxon>
        <taxon>Pentapetalae</taxon>
        <taxon>rosids</taxon>
        <taxon>malvids</taxon>
        <taxon>Brassicales</taxon>
        <taxon>Brassicaceae</taxon>
        <taxon>Camelineae</taxon>
        <taxon>Arabidopsis</taxon>
    </lineage>
</organism>
<gene>
    <name type="primary">OFP3</name>
    <name type="ordered locus">At5g58360</name>
    <name type="ORF">MCK7.23</name>
</gene>
<feature type="chain" id="PRO_0000429672" description="Transcription repressor OFP3">
    <location>
        <begin position="1"/>
        <end position="296"/>
    </location>
</feature>
<feature type="domain" description="OVATE" evidence="2">
    <location>
        <begin position="228"/>
        <end position="287"/>
    </location>
</feature>
<feature type="region of interest" description="Disordered" evidence="3">
    <location>
        <begin position="27"/>
        <end position="115"/>
    </location>
</feature>
<feature type="region of interest" description="Disordered" evidence="3">
    <location>
        <begin position="131"/>
        <end position="196"/>
    </location>
</feature>
<feature type="compositionally biased region" description="Polar residues" evidence="3">
    <location>
        <begin position="60"/>
        <end position="69"/>
    </location>
</feature>
<feature type="compositionally biased region" description="Basic residues" evidence="3">
    <location>
        <begin position="78"/>
        <end position="88"/>
    </location>
</feature>
<feature type="compositionally biased region" description="Low complexity" evidence="3">
    <location>
        <begin position="92"/>
        <end position="115"/>
    </location>
</feature>
<feature type="compositionally biased region" description="Basic and acidic residues" evidence="3">
    <location>
        <begin position="136"/>
        <end position="159"/>
    </location>
</feature>
<protein>
    <recommendedName>
        <fullName>Transcription repressor OFP3</fullName>
    </recommendedName>
    <alternativeName>
        <fullName>Ovate family protein 3</fullName>
        <shortName>AtOFP3</shortName>
    </alternativeName>
</protein>
<dbReference type="EMBL" id="AB019228">
    <property type="protein sequence ID" value="BAA96927.1"/>
    <property type="molecule type" value="Genomic_DNA"/>
</dbReference>
<dbReference type="EMBL" id="CP002688">
    <property type="protein sequence ID" value="AED97042.1"/>
    <property type="molecule type" value="Genomic_DNA"/>
</dbReference>
<dbReference type="EMBL" id="DQ056725">
    <property type="protein sequence ID" value="AAY78869.1"/>
    <property type="molecule type" value="mRNA"/>
</dbReference>
<dbReference type="RefSeq" id="NP_200644.1">
    <property type="nucleotide sequence ID" value="NM_125221.2"/>
</dbReference>
<dbReference type="SMR" id="Q9LVL4"/>
<dbReference type="BioGRID" id="21192">
    <property type="interactions" value="5"/>
</dbReference>
<dbReference type="IntAct" id="Q9LVL4">
    <property type="interactions" value="4"/>
</dbReference>
<dbReference type="STRING" id="3702.Q9LVL4"/>
<dbReference type="PaxDb" id="3702-AT5G58360.1"/>
<dbReference type="EnsemblPlants" id="AT5G58360.1">
    <property type="protein sequence ID" value="AT5G58360.1"/>
    <property type="gene ID" value="AT5G58360"/>
</dbReference>
<dbReference type="GeneID" id="835948"/>
<dbReference type="Gramene" id="AT5G58360.1">
    <property type="protein sequence ID" value="AT5G58360.1"/>
    <property type="gene ID" value="AT5G58360"/>
</dbReference>
<dbReference type="KEGG" id="ath:AT5G58360"/>
<dbReference type="Araport" id="AT5G58360"/>
<dbReference type="TAIR" id="AT5G58360">
    <property type="gene designation" value="OFP3"/>
</dbReference>
<dbReference type="eggNOG" id="ENOG502RTS2">
    <property type="taxonomic scope" value="Eukaryota"/>
</dbReference>
<dbReference type="HOGENOM" id="CLU_036558_0_0_1"/>
<dbReference type="InParanoid" id="Q9LVL4"/>
<dbReference type="OMA" id="DIMPHSW"/>
<dbReference type="OrthoDB" id="1928390at2759"/>
<dbReference type="PRO" id="PR:Q9LVL4"/>
<dbReference type="Proteomes" id="UP000006548">
    <property type="component" value="Chromosome 5"/>
</dbReference>
<dbReference type="ExpressionAtlas" id="Q9LVL4">
    <property type="expression patterns" value="baseline and differential"/>
</dbReference>
<dbReference type="GO" id="GO:0005634">
    <property type="term" value="C:nucleus"/>
    <property type="evidence" value="ECO:0007669"/>
    <property type="project" value="UniProtKB-SubCell"/>
</dbReference>
<dbReference type="GO" id="GO:0003677">
    <property type="term" value="F:DNA binding"/>
    <property type="evidence" value="ECO:0007669"/>
    <property type="project" value="InterPro"/>
</dbReference>
<dbReference type="GO" id="GO:0045892">
    <property type="term" value="P:negative regulation of DNA-templated transcription"/>
    <property type="evidence" value="ECO:0000314"/>
    <property type="project" value="TAIR"/>
</dbReference>
<dbReference type="InterPro" id="IPR025830">
    <property type="entry name" value="DNA_bnd_dom_ovate"/>
</dbReference>
<dbReference type="InterPro" id="IPR038933">
    <property type="entry name" value="Ovate"/>
</dbReference>
<dbReference type="InterPro" id="IPR006458">
    <property type="entry name" value="Ovate_C"/>
</dbReference>
<dbReference type="NCBIfam" id="TIGR01568">
    <property type="entry name" value="A_thal_3678"/>
    <property type="match status" value="1"/>
</dbReference>
<dbReference type="PANTHER" id="PTHR33057:SF128">
    <property type="entry name" value="TRANSCRIPTION REPRESSOR OFP3"/>
    <property type="match status" value="1"/>
</dbReference>
<dbReference type="PANTHER" id="PTHR33057">
    <property type="entry name" value="TRANSCRIPTION REPRESSOR OFP7-RELATED"/>
    <property type="match status" value="1"/>
</dbReference>
<dbReference type="Pfam" id="PF13724">
    <property type="entry name" value="DNA_binding_2"/>
    <property type="match status" value="1"/>
</dbReference>
<dbReference type="Pfam" id="PF04844">
    <property type="entry name" value="Ovate"/>
    <property type="match status" value="1"/>
</dbReference>
<dbReference type="PROSITE" id="PS51754">
    <property type="entry name" value="OVATE"/>
    <property type="match status" value="1"/>
</dbReference>
<comment type="function">
    <text evidence="5">Transcriptional repressor that may regulate multiple aspects of plant growth and development through the regulation of BEL1-LIKE (BLH) and KNOX TALE (KNAT) homeodomain transcription factors.</text>
</comment>
<comment type="subunit">
    <text evidence="4">Interacts with BLH1, BLH3, KNAT5 and KNAT7.</text>
</comment>
<comment type="subcellular location">
    <subcellularLocation>
        <location evidence="1">Nucleus</location>
    </subcellularLocation>
</comment>
<comment type="miscellaneous">
    <text evidence="6">Plants over-expressing OFP3 have no visible phenotype.</text>
</comment>
<keyword id="KW-0539">Nucleus</keyword>
<keyword id="KW-1185">Reference proteome</keyword>
<keyword id="KW-0678">Repressor</keyword>
<keyword id="KW-0804">Transcription</keyword>
<keyword id="KW-0805">Transcription regulation</keyword>
<reference key="1">
    <citation type="journal article" date="2000" name="DNA Res.">
        <title>Structural analysis of Arabidopsis thaliana chromosome 5. X. Sequence features of the regions of 3,076,755 bp covered by sixty P1 and TAC clones.</title>
        <authorList>
            <person name="Sato S."/>
            <person name="Nakamura Y."/>
            <person name="Kaneko T."/>
            <person name="Katoh T."/>
            <person name="Asamizu E."/>
            <person name="Kotani H."/>
            <person name="Tabata S."/>
        </authorList>
    </citation>
    <scope>NUCLEOTIDE SEQUENCE [LARGE SCALE GENOMIC DNA]</scope>
    <source>
        <strain>cv. Columbia</strain>
    </source>
</reference>
<reference key="2">
    <citation type="journal article" date="2017" name="Plant J.">
        <title>Araport11: a complete reannotation of the Arabidopsis thaliana reference genome.</title>
        <authorList>
            <person name="Cheng C.Y."/>
            <person name="Krishnakumar V."/>
            <person name="Chan A.P."/>
            <person name="Thibaud-Nissen F."/>
            <person name="Schobel S."/>
            <person name="Town C.D."/>
        </authorList>
    </citation>
    <scope>GENOME REANNOTATION</scope>
    <source>
        <strain>cv. Columbia</strain>
    </source>
</reference>
<reference key="3">
    <citation type="submission" date="2005-05" db="EMBL/GenBank/DDBJ databases">
        <authorList>
            <person name="Underwood B.A."/>
            <person name="Xiao Y.-L."/>
            <person name="Moskal W.A. Jr."/>
            <person name="Monaghan E.L."/>
            <person name="Wang W."/>
            <person name="Redman J.C."/>
            <person name="Wu H.C."/>
            <person name="Utterback T."/>
            <person name="Town C.D."/>
        </authorList>
    </citation>
    <scope>NUCLEOTIDE SEQUENCE [LARGE SCALE MRNA]</scope>
    <source>
        <strain>cv. Columbia</strain>
    </source>
</reference>
<reference key="4">
    <citation type="journal article" date="2005" name="Proc. Natl. Acad. Sci. U.S.A.">
        <title>A central role of Arabidopsis thaliana ovate family proteins in networking and subcellular localization of 3-aa loop extension homeodomain proteins.</title>
        <authorList>
            <person name="Hackbusch J."/>
            <person name="Richter K."/>
            <person name="Muller J."/>
            <person name="Salamini F."/>
            <person name="Uhrig J.F."/>
        </authorList>
    </citation>
    <scope>INTERACTION WITH BLH1; BLH3; KNAT5 AND KNAT7</scope>
</reference>
<reference key="5">
    <citation type="journal article" date="2011" name="PLoS ONE">
        <title>Arabidopsis ovate family proteins, a novel transcriptional repressor family, control multiple aspects of plant growth and development.</title>
        <authorList>
            <person name="Wang S."/>
            <person name="Chang Y."/>
            <person name="Guo J."/>
            <person name="Zeng Q."/>
            <person name="Ellis B.E."/>
            <person name="Chen J.G."/>
        </authorList>
    </citation>
    <scope>FUNCTION</scope>
    <scope>GENE FAMILY</scope>
</reference>